<organism>
    <name type="scientific">Homo sapiens</name>
    <name type="common">Human</name>
    <dbReference type="NCBI Taxonomy" id="9606"/>
    <lineage>
        <taxon>Eukaryota</taxon>
        <taxon>Metazoa</taxon>
        <taxon>Chordata</taxon>
        <taxon>Craniata</taxon>
        <taxon>Vertebrata</taxon>
        <taxon>Euteleostomi</taxon>
        <taxon>Mammalia</taxon>
        <taxon>Eutheria</taxon>
        <taxon>Euarchontoglires</taxon>
        <taxon>Primates</taxon>
        <taxon>Haplorrhini</taxon>
        <taxon>Catarrhini</taxon>
        <taxon>Hominidae</taxon>
        <taxon>Homo</taxon>
    </lineage>
</organism>
<comment type="function">
    <text evidence="6 8 12">Adapter protein which associates with tyrosine-phosphorylated growth factor receptors or their cellular substrates. Maintains low levels of EIF2S1 phosphorylation by promoting its dephosphorylation by PP1. Plays a role in ELK1-dependent transcriptional activation in response to activated Ras signaling.</text>
</comment>
<comment type="subunit">
    <text evidence="1 6 7 8 9 10 11 12 13 14">Interacts with DOCK1, LIMS1 and TGFB1I1. Part of a complex containing PPP1R15B, PP1 and NCK2. Interacts with FASLG (By similarity). Interacts with AXL. Interacts with PAK1, PKN2 and SOS1. Interacts (via SH2 domain) with EGFR. Interacts (via SH2 domain) with DDR1. Interacts with IRS1 (PubMed:11171109).</text>
</comment>
<comment type="interaction">
    <interactant intactId="EBI-713635">
        <id>O43639</id>
    </interactant>
    <interactant intactId="EBI-743598">
        <id>Q9NYB9</id>
        <label>ABI2</label>
    </interactant>
    <organismsDiffer>false</organismsDiffer>
    <experiments>8</experiments>
</comment>
<comment type="interaction">
    <interactant intactId="EBI-713635">
        <id>O43639</id>
    </interactant>
    <interactant intactId="EBI-11096309">
        <id>Q9NYB9-2</id>
        <label>ABI2</label>
    </interactant>
    <organismsDiffer>false</organismsDiffer>
    <experiments>10</experiments>
</comment>
<comment type="interaction">
    <interactant intactId="EBI-713635">
        <id>O43639</id>
    </interactant>
    <interactant intactId="EBI-742038">
        <id>Q9P2A4</id>
        <label>ABI3</label>
    </interactant>
    <organismsDiffer>false</organismsDiffer>
    <experiments>6</experiments>
</comment>
<comment type="interaction">
    <interactant intactId="EBI-713635">
        <id>O43639</id>
    </interactant>
    <interactant intactId="EBI-14493093">
        <id>Q3KP44</id>
        <label>ANKRD55</label>
    </interactant>
    <organismsDiffer>false</organismsDiffer>
    <experiments>3</experiments>
</comment>
<comment type="interaction">
    <interactant intactId="EBI-713635">
        <id>O43639</id>
    </interactant>
    <interactant intactId="EBI-17714371">
        <id>Q7Z6G8-3</id>
        <label>ANKS1B</label>
    </interactant>
    <organismsDiffer>false</organismsDiffer>
    <experiments>3</experiments>
</comment>
<comment type="interaction">
    <interactant intactId="EBI-713635">
        <id>O43639</id>
    </interactant>
    <interactant intactId="EBI-308663">
        <id>A7KAX9</id>
        <label>ARHGAP32</label>
    </interactant>
    <organismsDiffer>false</organismsDiffer>
    <experiments>3</experiments>
</comment>
<comment type="interaction">
    <interactant intactId="EBI-713635">
        <id>O43639</id>
    </interactant>
    <interactant intactId="EBI-702093">
        <id>P56945</id>
        <label>BCAR1</label>
    </interactant>
    <organismsDiffer>false</organismsDiffer>
    <experiments>3</experiments>
</comment>
<comment type="interaction">
    <interactant intactId="EBI-713635">
        <id>O43639</id>
    </interactant>
    <interactant intactId="EBI-10183342">
        <id>Q9H165-2</id>
        <label>BCL11A</label>
    </interactant>
    <organismsDiffer>false</organismsDiffer>
    <experiments>6</experiments>
</comment>
<comment type="interaction">
    <interactant intactId="EBI-713635">
        <id>O43639</id>
    </interactant>
    <interactant intactId="EBI-742279">
        <id>P62324</id>
        <label>BTG1</label>
    </interactant>
    <organismsDiffer>false</organismsDiffer>
    <experiments>3</experiments>
</comment>
<comment type="interaction">
    <interactant intactId="EBI-713635">
        <id>O43639</id>
    </interactant>
    <interactant intactId="EBI-715110">
        <id>Q53FE4</id>
        <label>C4orf17</label>
    </interactant>
    <organismsDiffer>false</organismsDiffer>
    <experiments>3</experiments>
</comment>
<comment type="interaction">
    <interactant intactId="EBI-713635">
        <id>O43639</id>
    </interactant>
    <interactant intactId="EBI-19051169">
        <id>Q8N350-4</id>
        <label>CBARP</label>
    </interactant>
    <organismsDiffer>false</organismsDiffer>
    <experiments>3</experiments>
</comment>
<comment type="interaction">
    <interactant intactId="EBI-713635">
        <id>O43639</id>
    </interactant>
    <interactant intactId="EBI-744027">
        <id>Q13191</id>
        <label>CBLB</label>
    </interactant>
    <organismsDiffer>false</organismsDiffer>
    <experiments>9</experiments>
</comment>
<comment type="interaction">
    <interactant intactId="EBI-713635">
        <id>O43639</id>
    </interactant>
    <interactant intactId="EBI-744556">
        <id>Q96HB5</id>
        <label>CCDC120</label>
    </interactant>
    <organismsDiffer>false</organismsDiffer>
    <experiments>3</experiments>
</comment>
<comment type="interaction">
    <interactant intactId="EBI-713635">
        <id>O43639</id>
    </interactant>
    <interactant intactId="EBI-1211297">
        <id>P07766</id>
        <label>CD3E</label>
    </interactant>
    <organismsDiffer>false</organismsDiffer>
    <experiments>4</experiments>
</comment>
<comment type="interaction">
    <interactant intactId="EBI-713635">
        <id>O43639</id>
    </interactant>
    <interactant intactId="EBI-718947">
        <id>P15882</id>
        <label>CHN1</label>
    </interactant>
    <organismsDiffer>false</organismsDiffer>
    <experiments>16</experiments>
</comment>
<comment type="interaction">
    <interactant intactId="EBI-713635">
        <id>O43639</id>
    </interactant>
    <interactant intactId="EBI-714925">
        <id>P52757</id>
        <label>CHN2</label>
    </interactant>
    <organismsDiffer>false</organismsDiffer>
    <experiments>6</experiments>
</comment>
<comment type="interaction">
    <interactant intactId="EBI-713635">
        <id>O43639</id>
    </interactant>
    <interactant intactId="EBI-372594">
        <id>Q99828</id>
        <label>CIB1</label>
    </interactant>
    <organismsDiffer>false</organismsDiffer>
    <experiments>3</experiments>
</comment>
<comment type="interaction">
    <interactant intactId="EBI-713635">
        <id>O43639</id>
    </interactant>
    <interactant intactId="EBI-5654244">
        <id>Q9C0C6</id>
        <label>CIPC</label>
    </interactant>
    <organismsDiffer>false</organismsDiffer>
    <experiments>3</experiments>
</comment>
<comment type="interaction">
    <interactant intactId="EBI-713635">
        <id>O43639</id>
    </interactant>
    <interactant intactId="EBI-11977093">
        <id>Q6ZS10</id>
        <label>CLEC17A</label>
    </interactant>
    <organismsDiffer>false</organismsDiffer>
    <experiments>3</experiments>
</comment>
<comment type="interaction">
    <interactant intactId="EBI-713635">
        <id>O43639</id>
    </interactant>
    <interactant intactId="EBI-11088043">
        <id>Q16630-2</id>
        <label>CPSF6</label>
    </interactant>
    <organismsDiffer>false</organismsDiffer>
    <experiments>3</experiments>
</comment>
<comment type="interaction">
    <interactant intactId="EBI-713635">
        <id>O43639</id>
    </interactant>
    <interactant intactId="EBI-746909">
        <id>Q8N684</id>
        <label>CPSF7</label>
    </interactant>
    <organismsDiffer>false</organismsDiffer>
    <experiments>4</experiments>
</comment>
<comment type="interaction">
    <interactant intactId="EBI-713635">
        <id>O43639</id>
    </interactant>
    <interactant intactId="EBI-11523759">
        <id>Q8N684-3</id>
        <label>CPSF7</label>
    </interactant>
    <organismsDiffer>false</organismsDiffer>
    <experiments>3</experiments>
</comment>
<comment type="interaction">
    <interactant intactId="EBI-713635">
        <id>O43639</id>
    </interactant>
    <interactant intactId="EBI-5838167">
        <id>Q9NWM3</id>
        <label>CUEDC1</label>
    </interactant>
    <organismsDiffer>false</organismsDiffer>
    <experiments>3</experiments>
</comment>
<comment type="interaction">
    <interactant intactId="EBI-713635">
        <id>O43639</id>
    </interactant>
    <interactant intactId="EBI-711879">
        <id>Q08345</id>
        <label>DDR1</label>
    </interactant>
    <organismsDiffer>false</organismsDiffer>
    <experiments>3</experiments>
</comment>
<comment type="interaction">
    <interactant intactId="EBI-713635">
        <id>O43639</id>
    </interactant>
    <interactant intactId="EBI-12843376">
        <id>Q8NES8</id>
        <label>DEFB124</label>
    </interactant>
    <organismsDiffer>false</organismsDiffer>
    <experiments>3</experiments>
</comment>
<comment type="interaction">
    <interactant intactId="EBI-713635">
        <id>O43639</id>
    </interactant>
    <interactant intactId="EBI-11988027">
        <id>Q9NRI5-2</id>
        <label>DISC1</label>
    </interactant>
    <organismsDiffer>false</organismsDiffer>
    <experiments>3</experiments>
</comment>
<comment type="interaction">
    <interactant intactId="EBI-713635">
        <id>O43639</id>
    </interactant>
    <interactant intactId="EBI-12000556">
        <id>Q9Y2H0-1</id>
        <label>DLGAP4</label>
    </interactant>
    <organismsDiffer>false</organismsDiffer>
    <experiments>6</experiments>
</comment>
<comment type="interaction">
    <interactant intactId="EBI-713635">
        <id>O43639</id>
    </interactant>
    <interactant intactId="EBI-712941">
        <id>Q14919</id>
        <label>DRAP1</label>
    </interactant>
    <organismsDiffer>false</organismsDiffer>
    <experiments>3</experiments>
</comment>
<comment type="interaction">
    <interactant intactId="EBI-713635">
        <id>O43639</id>
    </interactant>
    <interactant intactId="EBI-2340258">
        <id>Q8N9I9</id>
        <label>DTX3</label>
    </interactant>
    <organismsDiffer>false</organismsDiffer>
    <experiments>5</experiments>
</comment>
<comment type="interaction">
    <interactant intactId="EBI-713635">
        <id>O43639</id>
    </interactant>
    <interactant intactId="EBI-10185025">
        <id>Q86TH3</id>
        <label>DVL1</label>
    </interactant>
    <organismsDiffer>false</organismsDiffer>
    <experiments>3</experiments>
</comment>
<comment type="interaction">
    <interactant intactId="EBI-713635">
        <id>O43639</id>
    </interactant>
    <interactant intactId="EBI-2349927">
        <id>Q5JST6</id>
        <label>EFHC2</label>
    </interactant>
    <organismsDiffer>false</organismsDiffer>
    <experiments>3</experiments>
</comment>
<comment type="interaction">
    <interactant intactId="EBI-713635">
        <id>O43639</id>
    </interactant>
    <interactant intactId="EBI-7532268">
        <id>P52799</id>
        <label>EFNB2</label>
    </interactant>
    <organismsDiffer>false</organismsDiffer>
    <experiments>7</experiments>
</comment>
<comment type="interaction">
    <interactant intactId="EBI-713635">
        <id>O43639</id>
    </interactant>
    <interactant intactId="EBI-709735">
        <id>O15372</id>
        <label>EIF3H</label>
    </interactant>
    <organismsDiffer>false</organismsDiffer>
    <experiments>6</experiments>
</comment>
<comment type="interaction">
    <interactant intactId="EBI-713635">
        <id>O43639</id>
    </interactant>
    <interactant intactId="EBI-10184995">
        <id>Q6IB98</id>
        <label>EIF3S3</label>
    </interactant>
    <organismsDiffer>false</organismsDiffer>
    <experiments>3</experiments>
</comment>
<comment type="interaction">
    <interactant intactId="EBI-713635">
        <id>O43639</id>
    </interactant>
    <interactant intactId="EBI-641062">
        <id>P04626</id>
        <label>ERBB2</label>
    </interactant>
    <organismsDiffer>false</organismsDiffer>
    <experiments>2</experiments>
</comment>
<comment type="interaction">
    <interactant intactId="EBI-713635">
        <id>O43639</id>
    </interactant>
    <interactant intactId="EBI-720706">
        <id>P21860</id>
        <label>ERBB3</label>
    </interactant>
    <organismsDiffer>false</organismsDiffer>
    <experiments>2</experiments>
</comment>
<comment type="interaction">
    <interactant intactId="EBI-713635">
        <id>O43639</id>
    </interactant>
    <interactant intactId="EBI-744506">
        <id>Q86V42</id>
        <label>FAM124A</label>
    </interactant>
    <organismsDiffer>false</organismsDiffer>
    <experiments>3</experiments>
</comment>
<comment type="interaction">
    <interactant intactId="EBI-713635">
        <id>O43639</id>
    </interactant>
    <interactant intactId="EBI-10220102">
        <id>B7ZLH0</id>
        <label>FAM22F</label>
    </interactant>
    <organismsDiffer>false</organismsDiffer>
    <experiments>3</experiments>
</comment>
<comment type="interaction">
    <interactant intactId="EBI-713635">
        <id>O43639</id>
    </interactant>
    <interactant intactId="EBI-34579660">
        <id>Q5JRC9</id>
        <label>FAM47A</label>
    </interactant>
    <organismsDiffer>false</organismsDiffer>
    <experiments>3</experiments>
</comment>
<comment type="interaction">
    <interactant intactId="EBI-713635">
        <id>O43639</id>
    </interactant>
    <interactant intactId="EBI-1644252">
        <id>Q9NYF3</id>
        <label>FAM53C</label>
    </interactant>
    <organismsDiffer>false</organismsDiffer>
    <experiments>8</experiments>
</comment>
<comment type="interaction">
    <interactant intactId="EBI-713635">
        <id>O43639</id>
    </interactant>
    <interactant intactId="EBI-1384254">
        <id>Q86UY5</id>
        <label>FAM83A</label>
    </interactant>
    <organismsDiffer>false</organismsDiffer>
    <experiments>3</experiments>
</comment>
<comment type="interaction">
    <interactant intactId="EBI-713635">
        <id>O43639</id>
    </interactant>
    <interactant intactId="EBI-495538">
        <id>P48023</id>
        <label>FASLG</label>
    </interactant>
    <organismsDiffer>false</organismsDiffer>
    <experiments>4</experiments>
</comment>
<comment type="interaction">
    <interactant intactId="EBI-713635">
        <id>O43639</id>
    </interactant>
    <interactant intactId="EBI-11959077">
        <id>Q6PCT2-2</id>
        <label>FBXL19</label>
    </interactant>
    <organismsDiffer>false</organismsDiffer>
    <experiments>3</experiments>
</comment>
<comment type="interaction">
    <interactant intactId="EBI-713635">
        <id>O43639</id>
    </interactant>
    <interactant intactId="EBI-10185081">
        <id>Q96LA5</id>
        <label>FCRL2</label>
    </interactant>
    <organismsDiffer>false</organismsDiffer>
    <experiments>3</experiments>
</comment>
<comment type="interaction">
    <interactant intactId="EBI-713635">
        <id>O43639</id>
    </interactant>
    <interactant intactId="EBI-2806743">
        <id>P53539</id>
        <label>FOSB</label>
    </interactant>
    <organismsDiffer>false</organismsDiffer>
    <experiments>3</experiments>
</comment>
<comment type="interaction">
    <interactant intactId="EBI-713635">
        <id>O43639</id>
    </interactant>
    <interactant intactId="EBI-1753267">
        <id>O15117</id>
        <label>FYB1</label>
    </interactant>
    <organismsDiffer>false</organismsDiffer>
    <experiments>3</experiments>
</comment>
<comment type="interaction">
    <interactant intactId="EBI-713635">
        <id>O43639</id>
    </interactant>
    <interactant intactId="EBI-517684">
        <id>Q13480</id>
        <label>GAB1</label>
    </interactant>
    <organismsDiffer>false</organismsDiffer>
    <experiments>5</experiments>
</comment>
<comment type="interaction">
    <interactant intactId="EBI-713635">
        <id>O43639</id>
    </interactant>
    <interactant intactId="EBI-3440103">
        <id>Q9H706</id>
        <label>GAREM1</label>
    </interactant>
    <organismsDiffer>false</organismsDiffer>
    <experiments>3</experiments>
</comment>
<comment type="interaction">
    <interactant intactId="EBI-713635">
        <id>O43639</id>
    </interactant>
    <interactant intactId="EBI-10259069">
        <id>Q86UU5</id>
        <label>GGN</label>
    </interactant>
    <organismsDiffer>false</organismsDiffer>
    <experiments>3</experiments>
</comment>
<comment type="interaction">
    <interactant intactId="EBI-713635">
        <id>O43639</id>
    </interactant>
    <interactant intactId="EBI-10172004">
        <id>Q8IX15-3</id>
        <label>HOMEZ</label>
    </interactant>
    <organismsDiffer>false</organismsDiffer>
    <experiments>3</experiments>
</comment>
<comment type="interaction">
    <interactant intactId="EBI-713635">
        <id>O43639</id>
    </interactant>
    <interactant intactId="EBI-740785">
        <id>P49639</id>
        <label>HOXA1</label>
    </interactant>
    <organismsDiffer>false</organismsDiffer>
    <experiments>3</experiments>
</comment>
<comment type="interaction">
    <interactant intactId="EBI-713635">
        <id>O43639</id>
    </interactant>
    <interactant intactId="EBI-3923226">
        <id>P09017</id>
        <label>HOXC4</label>
    </interactant>
    <organismsDiffer>false</organismsDiffer>
    <experiments>3</experiments>
</comment>
<comment type="interaction">
    <interactant intactId="EBI-713635">
        <id>O43639</id>
    </interactant>
    <interactant intactId="EBI-10185009">
        <id>Q86TF7</id>
        <label>HOXC4</label>
    </interactant>
    <organismsDiffer>false</organismsDiffer>
    <experiments>3</experiments>
</comment>
<comment type="interaction">
    <interactant intactId="EBI-713635">
        <id>O43639</id>
    </interactant>
    <interactant intactId="EBI-7098661">
        <id>P13378</id>
        <label>HOXD8</label>
    </interactant>
    <organismsDiffer>false</organismsDiffer>
    <experiments>3</experiments>
</comment>
<comment type="interaction">
    <interactant intactId="EBI-713635">
        <id>O43639</id>
    </interactant>
    <interactant intactId="EBI-7116203">
        <id>O75031</id>
        <label>HSF2BP</label>
    </interactant>
    <organismsDiffer>false</organismsDiffer>
    <experiments>3</experiments>
</comment>
<comment type="interaction">
    <interactant intactId="EBI-713635">
        <id>O43639</id>
    </interactant>
    <interactant intactId="EBI-6509505">
        <id>Q0VD86</id>
        <label>INCA1</label>
    </interactant>
    <organismsDiffer>false</organismsDiffer>
    <experiments>3</experiments>
</comment>
<comment type="interaction">
    <interactant intactId="EBI-713635">
        <id>O43639</id>
    </interactant>
    <interactant intactId="EBI-8471507">
        <id>Q9H0H0</id>
        <label>INTS2</label>
    </interactant>
    <organismsDiffer>false</organismsDiffer>
    <experiments>3</experiments>
</comment>
<comment type="interaction">
    <interactant intactId="EBI-713635">
        <id>O43639</id>
    </interactant>
    <interactant intactId="EBI-743960">
        <id>Q8N5Z5</id>
        <label>KCTD17</label>
    </interactant>
    <organismsDiffer>false</organismsDiffer>
    <experiments>3</experiments>
</comment>
<comment type="interaction">
    <interactant intactId="EBI-713635">
        <id>O43639</id>
    </interactant>
    <interactant intactId="EBI-739493">
        <id>Q6ZU52</id>
        <label>KIAA0408</label>
    </interactant>
    <organismsDiffer>false</organismsDiffer>
    <experiments>7</experiments>
</comment>
<comment type="interaction">
    <interactant intactId="EBI-713635">
        <id>O43639</id>
    </interactant>
    <interactant intactId="EBI-1379503">
        <id>P10721</id>
        <label>KIT</label>
    </interactant>
    <organismsDiffer>false</organismsDiffer>
    <experiments>2</experiments>
</comment>
<comment type="interaction">
    <interactant intactId="EBI-713635">
        <id>O43639</id>
    </interactant>
    <interactant intactId="EBI-2510117">
        <id>Q6TFL4</id>
        <label>KLHL24</label>
    </interactant>
    <organismsDiffer>false</organismsDiffer>
    <experiments>3</experiments>
</comment>
<comment type="interaction">
    <interactant intactId="EBI-713635">
        <id>O43639</id>
    </interactant>
    <interactant intactId="EBI-9477654">
        <id>Q6PF15</id>
        <label>KLHL35</label>
    </interactant>
    <organismsDiffer>false</organismsDiffer>
    <experiments>3</experiments>
</comment>
<comment type="interaction">
    <interactant intactId="EBI-713635">
        <id>O43639</id>
    </interactant>
    <interactant intactId="EBI-10981970">
        <id>Q5T749</id>
        <label>KPRP</label>
    </interactant>
    <organismsDiffer>false</organismsDiffer>
    <experiments>3</experiments>
</comment>
<comment type="interaction">
    <interactant intactId="EBI-713635">
        <id>O43639</id>
    </interactant>
    <interactant intactId="EBI-346946">
        <id>Q13094</id>
        <label>LCP2</label>
    </interactant>
    <organismsDiffer>false</organismsDiffer>
    <experiments>10</experiments>
</comment>
<comment type="interaction">
    <interactant intactId="EBI-713635">
        <id>O43639</id>
    </interactant>
    <interactant intactId="EBI-306928">
        <id>P48059</id>
        <label>LIMS1</label>
    </interactant>
    <organismsDiffer>false</organismsDiffer>
    <experiments>2</experiments>
</comment>
<comment type="interaction">
    <interactant intactId="EBI-713635">
        <id>O43639</id>
    </interactant>
    <interactant intactId="EBI-739832">
        <id>Q8TBB1</id>
        <label>LNX1</label>
    </interactant>
    <organismsDiffer>false</organismsDiffer>
    <experiments>3</experiments>
</comment>
<comment type="interaction">
    <interactant intactId="EBI-713635">
        <id>O43639</id>
    </interactant>
    <interactant intactId="EBI-10184751">
        <id>A6PVS8</id>
        <label>LRRIQ3</label>
    </interactant>
    <organismsDiffer>false</organismsDiffer>
    <experiments>6</experiments>
</comment>
<comment type="interaction">
    <interactant intactId="EBI-713635">
        <id>O43639</id>
    </interactant>
    <interactant intactId="EBI-741037">
        <id>Q9BRK4</id>
        <label>LZTS2</label>
    </interactant>
    <organismsDiffer>false</organismsDiffer>
    <experiments>6</experiments>
</comment>
<comment type="interaction">
    <interactant intactId="EBI-713635">
        <id>O43639</id>
    </interactant>
    <interactant intactId="EBI-1045155">
        <id>P43360</id>
        <label>MAGEA6</label>
    </interactant>
    <organismsDiffer>false</organismsDiffer>
    <experiments>6</experiments>
</comment>
<comment type="interaction">
    <interactant intactId="EBI-713635">
        <id>O43639</id>
    </interactant>
    <interactant intactId="EBI-719591">
        <id>Q96DN6</id>
        <label>MBD6</label>
    </interactant>
    <organismsDiffer>false</organismsDiffer>
    <experiments>3</experiments>
</comment>
<comment type="interaction">
    <interactant intactId="EBI-713635">
        <id>O43639</id>
    </interactant>
    <interactant intactId="EBI-748397">
        <id>P50222</id>
        <label>MEOX2</label>
    </interactant>
    <organismsDiffer>false</organismsDiffer>
    <experiments>3</experiments>
</comment>
<comment type="interaction">
    <interactant intactId="EBI-713635">
        <id>O43639</id>
    </interactant>
    <interactant intactId="EBI-16439278">
        <id>Q6FHY5</id>
        <label>MEOX2</label>
    </interactant>
    <organismsDiffer>false</organismsDiffer>
    <experiments>3</experiments>
</comment>
<comment type="interaction">
    <interactant intactId="EBI-713635">
        <id>O43639</id>
    </interactant>
    <interactant intactId="EBI-1039152">
        <id>P08581</id>
        <label>MET</label>
    </interactant>
    <organismsDiffer>false</organismsDiffer>
    <experiments>2</experiments>
</comment>
<comment type="interaction">
    <interactant intactId="EBI-713635">
        <id>O43639</id>
    </interactant>
    <interactant intactId="EBI-2291868">
        <id>Q5JRA6</id>
        <label>MIA3</label>
    </interactant>
    <organismsDiffer>false</organismsDiffer>
    <experiments>3</experiments>
</comment>
<comment type="interaction">
    <interactant intactId="EBI-713635">
        <id>O43639</id>
    </interactant>
    <interactant intactId="EBI-7959025">
        <id>Q99583</id>
        <label>MNT</label>
    </interactant>
    <organismsDiffer>false</organismsDiffer>
    <experiments>3</experiments>
</comment>
<comment type="interaction">
    <interactant intactId="EBI-713635">
        <id>O43639</id>
    </interactant>
    <interactant intactId="EBI-2858213">
        <id>Q86VE0</id>
        <label>MYPOP</label>
    </interactant>
    <organismsDiffer>false</organismsDiffer>
    <experiments>3</experiments>
</comment>
<comment type="interaction">
    <interactant intactId="EBI-713635">
        <id>O43639</id>
    </interactant>
    <interactant intactId="EBI-10963850">
        <id>Q9NZQ3-3</id>
        <label>NCKIPSD</label>
    </interactant>
    <organismsDiffer>false</organismsDiffer>
    <experiments>3</experiments>
</comment>
<comment type="interaction">
    <interactant intactId="EBI-713635">
        <id>O43639</id>
    </interactant>
    <interactant intactId="EBI-5461341">
        <id>Q9H3P2</id>
        <label>NELFA</label>
    </interactant>
    <organismsDiffer>false</organismsDiffer>
    <experiments>3</experiments>
</comment>
<comment type="interaction">
    <interactant intactId="EBI-713635">
        <id>O43639</id>
    </interactant>
    <interactant intactId="EBI-2511306">
        <id>Q7Z628</id>
        <label>NET1</label>
    </interactant>
    <organismsDiffer>false</organismsDiffer>
    <experiments>3</experiments>
</comment>
<comment type="interaction">
    <interactant intactId="EBI-713635">
        <id>O43639</id>
    </interactant>
    <interactant intactId="EBI-10271199">
        <id>Q8NI38</id>
        <label>NFKBID</label>
    </interactant>
    <organismsDiffer>false</organismsDiffer>
    <experiments>3</experiments>
</comment>
<comment type="interaction">
    <interactant intactId="EBI-713635">
        <id>O43639</id>
    </interactant>
    <interactant intactId="EBI-2859639">
        <id>Q5HYW2</id>
        <label>NHSL2</label>
    </interactant>
    <organismsDiffer>false</organismsDiffer>
    <experiments>6</experiments>
</comment>
<comment type="interaction">
    <interactant intactId="EBI-713635">
        <id>O43639</id>
    </interactant>
    <interactant intactId="EBI-3932727">
        <id>Q99743</id>
        <label>NPAS2</label>
    </interactant>
    <organismsDiffer>false</organismsDiffer>
    <experiments>6</experiments>
</comment>
<comment type="interaction">
    <interactant intactId="EBI-713635">
        <id>O43639</id>
    </interactant>
    <interactant intactId="EBI-874629">
        <id>Q13285</id>
        <label>NR5A1</label>
    </interactant>
    <organismsDiffer>false</organismsDiffer>
    <experiments>3</experiments>
</comment>
<comment type="interaction">
    <interactant intactId="EBI-713635">
        <id>O43639</id>
    </interactant>
    <interactant intactId="EBI-17431136">
        <id>O60422</id>
        <label>ONECUT3</label>
    </interactant>
    <organismsDiffer>false</organismsDiffer>
    <experiments>3</experiments>
</comment>
<comment type="interaction">
    <interactant intactId="EBI-713635">
        <id>O43639</id>
    </interactant>
    <interactant intactId="EBI-1307">
        <id>Q13153</id>
        <label>PAK1</label>
    </interactant>
    <organismsDiffer>false</organismsDiffer>
    <experiments>13</experiments>
</comment>
<comment type="interaction">
    <interactant intactId="EBI-713635">
        <id>O43639</id>
    </interactant>
    <interactant intactId="EBI-1045887">
        <id>Q13177</id>
        <label>PAK2</label>
    </interactant>
    <organismsDiffer>false</organismsDiffer>
    <experiments>11</experiments>
</comment>
<comment type="interaction">
    <interactant intactId="EBI-713635">
        <id>O43639</id>
    </interactant>
    <interactant intactId="EBI-10302990">
        <id>Q9BYU1</id>
        <label>PBX4</label>
    </interactant>
    <organismsDiffer>false</organismsDiffer>
    <experiments>3</experiments>
</comment>
<comment type="interaction">
    <interactant intactId="EBI-713635">
        <id>O43639</id>
    </interactant>
    <interactant intactId="EBI-14131832">
        <id>Q8N4B1-4</id>
        <label>PHETA1</label>
    </interactant>
    <organismsDiffer>false</organismsDiffer>
    <experiments>3</experiments>
</comment>
<comment type="interaction">
    <interactant intactId="EBI-713635">
        <id>O43639</id>
    </interactant>
    <interactant intactId="EBI-11981743">
        <id>Q6ZUJ8-3</id>
        <label>PIK3AP1</label>
    </interactant>
    <organismsDiffer>false</organismsDiffer>
    <experiments>7</experiments>
</comment>
<comment type="interaction">
    <interactant intactId="EBI-713635">
        <id>O43639</id>
    </interactant>
    <interactant intactId="EBI-11320284">
        <id>Q9NQX0</id>
        <label>PRDM6</label>
    </interactant>
    <organismsDiffer>false</organismsDiffer>
    <experiments>3</experiments>
</comment>
<comment type="interaction">
    <interactant intactId="EBI-713635">
        <id>O43639</id>
    </interactant>
    <interactant intactId="EBI-5564642">
        <id>Q569H4</id>
        <label>PRR16</label>
    </interactant>
    <organismsDiffer>false</organismsDiffer>
    <experiments>3</experiments>
</comment>
<comment type="interaction">
    <interactant intactId="EBI-713635">
        <id>O43639</id>
    </interactant>
    <interactant intactId="EBI-10172814">
        <id>P86479</id>
        <label>PRR20C</label>
    </interactant>
    <organismsDiffer>false</organismsDiffer>
    <experiments>3</experiments>
</comment>
<comment type="interaction">
    <interactant intactId="EBI-713635">
        <id>O43639</id>
    </interactant>
    <interactant intactId="EBI-12754095">
        <id>P86480</id>
        <label>PRR20D</label>
    </interactant>
    <organismsDiffer>false</organismsDiffer>
    <experiments>3</experiments>
</comment>
<comment type="interaction">
    <interactant intactId="EBI-713635">
        <id>O43639</id>
    </interactant>
    <interactant intactId="EBI-752185">
        <id>O75832</id>
        <label>PSMD10</label>
    </interactant>
    <organismsDiffer>false</organismsDiffer>
    <experiments>2</experiments>
</comment>
<comment type="interaction">
    <interactant intactId="EBI-713635">
        <id>O43639</id>
    </interactant>
    <interactant intactId="EBI-929013">
        <id>Q02833</id>
        <label>RASSF7</label>
    </interactant>
    <organismsDiffer>false</organismsDiffer>
    <experiments>6</experiments>
</comment>
<comment type="interaction">
    <interactant intactId="EBI-713635">
        <id>O43639</id>
    </interactant>
    <interactant intactId="EBI-11322432">
        <id>Q8NC74</id>
        <label>RBBP8NL</label>
    </interactant>
    <organismsDiffer>false</organismsDiffer>
    <experiments>3</experiments>
</comment>
<comment type="interaction">
    <interactant intactId="EBI-713635">
        <id>O43639</id>
    </interactant>
    <interactant intactId="EBI-3232077">
        <id>Q5T8P6</id>
        <label>RBM26</label>
    </interactant>
    <organismsDiffer>false</organismsDiffer>
    <experiments>3</experiments>
</comment>
<comment type="interaction">
    <interactant intactId="EBI-713635">
        <id>O43639</id>
    </interactant>
    <interactant intactId="EBI-7545592">
        <id>Q9H6H4</id>
        <label>REEP4</label>
    </interactant>
    <organismsDiffer>false</organismsDiffer>
    <experiments>3</experiments>
</comment>
<comment type="interaction">
    <interactant intactId="EBI-713635">
        <id>O43639</id>
    </interactant>
    <interactant intactId="EBI-307352">
        <id>Q04864</id>
        <label>REL</label>
    </interactant>
    <organismsDiffer>false</organismsDiffer>
    <experiments>3</experiments>
</comment>
<comment type="interaction">
    <interactant intactId="EBI-713635">
        <id>O43639</id>
    </interactant>
    <interactant intactId="EBI-10829018">
        <id>Q04864-2</id>
        <label>REL</label>
    </interactant>
    <organismsDiffer>false</organismsDiffer>
    <experiments>3</experiments>
</comment>
<comment type="interaction">
    <interactant intactId="EBI-713635">
        <id>O43639</id>
    </interactant>
    <interactant intactId="EBI-1638043">
        <id>Q7L0Q8</id>
        <label>RHOU</label>
    </interactant>
    <organismsDiffer>false</organismsDiffer>
    <experiments>6</experiments>
</comment>
<comment type="interaction">
    <interactant intactId="EBI-713635">
        <id>O43639</id>
    </interactant>
    <interactant intactId="EBI-8538631">
        <id>Q96L33</id>
        <label>RHOV</label>
    </interactant>
    <organismsDiffer>false</organismsDiffer>
    <experiments>4</experiments>
</comment>
<comment type="interaction">
    <interactant intactId="EBI-713635">
        <id>O43639</id>
    </interactant>
    <interactant intactId="EBI-715945">
        <id>Q9NQC3</id>
        <label>RTN4</label>
    </interactant>
    <organismsDiffer>false</organismsDiffer>
    <experiments>2</experiments>
</comment>
<comment type="interaction">
    <interactant intactId="EBI-713635">
        <id>O43639</id>
    </interactant>
    <interactant intactId="EBI-2513111">
        <id>Q9UQR0</id>
        <label>SCML2</label>
    </interactant>
    <organismsDiffer>false</organismsDiffer>
    <experiments>3</experiments>
</comment>
<comment type="interaction">
    <interactant intactId="EBI-713635">
        <id>O43639</id>
    </interactant>
    <interactant intactId="EBI-17492262">
        <id>Q7RTU7</id>
        <label>SCX</label>
    </interactant>
    <organismsDiffer>false</organismsDiffer>
    <experiments>3</experiments>
</comment>
<comment type="interaction">
    <interactant intactId="EBI-713635">
        <id>O43639</id>
    </interactant>
    <interactant intactId="EBI-12223157">
        <id>Q15637-4</id>
        <label>SF1</label>
    </interactant>
    <organismsDiffer>false</organismsDiffer>
    <experiments>3</experiments>
</comment>
<comment type="interaction">
    <interactant intactId="EBI-713635">
        <id>O43639</id>
    </interactant>
    <interactant intactId="EBI-2462271">
        <id>Q15428</id>
        <label>SF3A2</label>
    </interactant>
    <organismsDiffer>false</organismsDiffer>
    <experiments>3</experiments>
</comment>
<comment type="interaction">
    <interactant intactId="EBI-713635">
        <id>O43639</id>
    </interactant>
    <interactant intactId="EBI-348469">
        <id>Q15427</id>
        <label>SF3B4</label>
    </interactant>
    <organismsDiffer>false</organismsDiffer>
    <experiments>7</experiments>
</comment>
<comment type="interaction">
    <interactant intactId="EBI-713635">
        <id>O43639</id>
    </interactant>
    <interactant intactId="EBI-4402781">
        <id>Q96IW2</id>
        <label>SHD</label>
    </interactant>
    <organismsDiffer>false</organismsDiffer>
    <experiments>3</experiments>
</comment>
<comment type="interaction">
    <interactant intactId="EBI-713635">
        <id>O43639</id>
    </interactant>
    <interactant intactId="EBI-632715">
        <id>Q13573</id>
        <label>SNW1</label>
    </interactant>
    <organismsDiffer>false</organismsDiffer>
    <experiments>3</experiments>
</comment>
<comment type="interaction">
    <interactant intactId="EBI-713635">
        <id>O43639</id>
    </interactant>
    <interactant intactId="EBI-1539606">
        <id>O14512</id>
        <label>SOCS7</label>
    </interactant>
    <organismsDiffer>false</organismsDiffer>
    <experiments>4</experiments>
</comment>
<comment type="interaction">
    <interactant intactId="EBI-713635">
        <id>O43639</id>
    </interactant>
    <interactant intactId="EBI-311323">
        <id>O94875</id>
        <label>SORBS2</label>
    </interactant>
    <organismsDiffer>false</organismsDiffer>
    <experiments>3</experiments>
</comment>
<comment type="interaction">
    <interactant intactId="EBI-713635">
        <id>O43639</id>
    </interactant>
    <interactant intactId="EBI-2510414">
        <id>Q8IUW3</id>
        <label>SPATA2L</label>
    </interactant>
    <organismsDiffer>false</organismsDiffer>
    <experiments>3</experiments>
</comment>
<comment type="interaction">
    <interactant intactId="EBI-713635">
        <id>O43639</id>
    </interactant>
    <interactant intactId="EBI-11995806">
        <id>Q9H0A9-2</id>
        <label>SPATC1L</label>
    </interactant>
    <organismsDiffer>false</organismsDiffer>
    <experiments>5</experiments>
</comment>
<comment type="interaction">
    <interactant intactId="EBI-713635">
        <id>O43639</id>
    </interactant>
    <interactant intactId="EBI-742487">
        <id>O43597</id>
        <label>SPRY2</label>
    </interactant>
    <organismsDiffer>false</organismsDiffer>
    <experiments>3</experiments>
</comment>
<comment type="interaction">
    <interactant intactId="EBI-713635">
        <id>O43639</id>
    </interactant>
    <interactant intactId="EBI-8541270">
        <id>Q9H3Y6</id>
        <label>SRMS</label>
    </interactant>
    <organismsDiffer>false</organismsDiffer>
    <experiments>3</experiments>
</comment>
<comment type="interaction">
    <interactant intactId="EBI-713635">
        <id>O43639</id>
    </interactant>
    <interactant intactId="EBI-8743776">
        <id>Q8TE77</id>
        <label>SSH3</label>
    </interactant>
    <organismsDiffer>false</organismsDiffer>
    <experiments>3</experiments>
</comment>
<comment type="interaction">
    <interactant intactId="EBI-713635">
        <id>O43639</id>
    </interactant>
    <interactant intactId="EBI-2682386">
        <id>Q96PV0</id>
        <label>SYNGAP1</label>
    </interactant>
    <organismsDiffer>false</organismsDiffer>
    <experiments>3</experiments>
</comment>
<comment type="interaction">
    <interactant intactId="EBI-713635">
        <id>O43639</id>
    </interactant>
    <interactant intactId="EBI-533224">
        <id>P15884</id>
        <label>TCF4</label>
    </interactant>
    <organismsDiffer>false</organismsDiffer>
    <experiments>3</experiments>
</comment>
<comment type="interaction">
    <interactant intactId="EBI-713635">
        <id>O43639</id>
    </interactant>
    <interactant intactId="EBI-3923210">
        <id>Q8TDR4</id>
        <label>TCP10L</label>
    </interactant>
    <organismsDiffer>false</organismsDiffer>
    <experiments>3</experiments>
</comment>
<comment type="interaction">
    <interactant intactId="EBI-713635">
        <id>O43639</id>
    </interactant>
    <interactant intactId="EBI-12155101">
        <id>Q9BTD3</id>
        <label>TMEM121</label>
    </interactant>
    <organismsDiffer>false</organismsDiffer>
    <experiments>3</experiments>
</comment>
<comment type="interaction">
    <interactant intactId="EBI-713635">
        <id>O43639</id>
    </interactant>
    <interactant intactId="EBI-10182881">
        <id>A1L306</id>
        <label>TNR</label>
    </interactant>
    <organismsDiffer>false</organismsDiffer>
    <experiments>3</experiments>
</comment>
<comment type="interaction">
    <interactant intactId="EBI-713635">
        <id>O43639</id>
    </interactant>
    <interactant intactId="EBI-719493">
        <id>P14373</id>
        <label>TRIM27</label>
    </interactant>
    <organismsDiffer>false</organismsDiffer>
    <experiments>6</experiments>
</comment>
<comment type="interaction">
    <interactant intactId="EBI-713635">
        <id>O43639</id>
    </interactant>
    <interactant intactId="EBI-725997">
        <id>Q8WV44</id>
        <label>TRIM41</label>
    </interactant>
    <organismsDiffer>false</organismsDiffer>
    <experiments>8</experiments>
</comment>
<comment type="interaction">
    <interactant intactId="EBI-713635">
        <id>O43639</id>
    </interactant>
    <interactant intactId="EBI-742327">
        <id>Q15654</id>
        <label>TRIP6</label>
    </interactant>
    <organismsDiffer>false</organismsDiffer>
    <experiments>8</experiments>
</comment>
<comment type="interaction">
    <interactant intactId="EBI-713635">
        <id>O43639</id>
    </interactant>
    <interactant intactId="EBI-7877438">
        <id>P42681</id>
        <label>TXK</label>
    </interactant>
    <organismsDiffer>false</organismsDiffer>
    <experiments>3</experiments>
</comment>
<comment type="interaction">
    <interactant intactId="EBI-713635">
        <id>O43639</id>
    </interactant>
    <interactant intactId="EBI-3390054">
        <id>P0CG48</id>
        <label>UBC</label>
    </interactant>
    <organismsDiffer>false</organismsDiffer>
    <experiments>2</experiments>
</comment>
<comment type="interaction">
    <interactant intactId="EBI-713635">
        <id>O43639</id>
    </interactant>
    <interactant intactId="EBI-12220239">
        <id>Q8NFA0-2</id>
        <label>USP32</label>
    </interactant>
    <organismsDiffer>false</organismsDiffer>
    <experiments>5</experiments>
</comment>
<comment type="interaction">
    <interactant intactId="EBI-713635">
        <id>O43639</id>
    </interactant>
    <interactant intactId="EBI-2116622">
        <id>Q5ST30</id>
        <label>VARS2</label>
    </interactant>
    <organismsDiffer>false</organismsDiffer>
    <experiments>3</experiments>
</comment>
<comment type="interaction">
    <interactant intactId="EBI-713635">
        <id>O43639</id>
    </interactant>
    <interactant intactId="EBI-10244997">
        <id>Q5ST30-4</id>
        <label>VARS2</label>
    </interactant>
    <organismsDiffer>false</organismsDiffer>
    <experiments>3</experiments>
</comment>
<comment type="interaction">
    <interactant intactId="EBI-713635">
        <id>O43639</id>
    </interactant>
    <interactant intactId="EBI-4400866">
        <id>Q9H9H4</id>
        <label>VPS37B</label>
    </interactant>
    <organismsDiffer>false</organismsDiffer>
    <experiments>6</experiments>
</comment>
<comment type="interaction">
    <interactant intactId="EBI-713635">
        <id>O43639</id>
    </interactant>
    <interactant intactId="EBI-346375">
        <id>P42768</id>
        <label>WAS</label>
    </interactant>
    <organismsDiffer>false</organismsDiffer>
    <experiments>3</experiments>
</comment>
<comment type="interaction">
    <interactant intactId="EBI-713635">
        <id>O43639</id>
    </interactant>
    <interactant intactId="EBI-1548747">
        <id>Q92558</id>
        <label>WASF1</label>
    </interactant>
    <organismsDiffer>false</organismsDiffer>
    <experiments>5</experiments>
</comment>
<comment type="interaction">
    <interactant intactId="EBI-713635">
        <id>O43639</id>
    </interactant>
    <interactant intactId="EBI-957615">
        <id>O00401</id>
        <label>WASL</label>
    </interactant>
    <organismsDiffer>false</organismsDiffer>
    <experiments>9</experiments>
</comment>
<comment type="interaction">
    <interactant intactId="EBI-713635">
        <id>O43639</id>
    </interactant>
    <interactant intactId="EBI-12052927">
        <id>O43516-4</id>
        <label>WIPF1</label>
    </interactant>
    <organismsDiffer>false</organismsDiffer>
    <experiments>3</experiments>
</comment>
<comment type="interaction">
    <interactant intactId="EBI-713635">
        <id>O43639</id>
    </interactant>
    <interactant intactId="EBI-12377219">
        <id>Q9Y330</id>
        <label>ZBTB12</label>
    </interactant>
    <organismsDiffer>false</organismsDiffer>
    <experiments>3</experiments>
</comment>
<comment type="interaction">
    <interactant intactId="EBI-713635">
        <id>O43639</id>
    </interactant>
    <interactant intactId="EBI-12287587">
        <id>B2RXF5</id>
        <label>ZBTB42</label>
    </interactant>
    <organismsDiffer>false</organismsDiffer>
    <experiments>3</experiments>
</comment>
<comment type="interaction">
    <interactant intactId="EBI-713635">
        <id>O43639</id>
    </interactant>
    <interactant intactId="EBI-740434">
        <id>O15156</id>
        <label>ZBTB7B</label>
    </interactant>
    <organismsDiffer>false</organismsDiffer>
    <experiments>3</experiments>
</comment>
<comment type="interaction">
    <interactant intactId="EBI-713635">
        <id>O43639</id>
    </interactant>
    <interactant intactId="EBI-11522250">
        <id>O15156-2</id>
        <label>ZBTB7B</label>
    </interactant>
    <organismsDiffer>false</organismsDiffer>
    <experiments>3</experiments>
</comment>
<comment type="interaction">
    <interactant intactId="EBI-713635">
        <id>O43639</id>
    </interactant>
    <interactant intactId="EBI-5458880">
        <id>Q96GY0</id>
        <label>ZC2HC1A</label>
    </interactant>
    <organismsDiffer>false</organismsDiffer>
    <experiments>3</experiments>
</comment>
<comment type="interaction">
    <interactant intactId="EBI-713635">
        <id>O43639</id>
    </interactant>
    <interactant intactId="EBI-12275374">
        <id>Q5TFG8</id>
        <label>ZC2HC1B</label>
    </interactant>
    <organismsDiffer>false</organismsDiffer>
    <experiments>3</experiments>
</comment>
<comment type="interaction">
    <interactant intactId="EBI-713635">
        <id>O43639</id>
    </interactant>
    <interactant intactId="EBI-9089622">
        <id>Q9BYN7</id>
        <label>ZNF341</label>
    </interactant>
    <organismsDiffer>false</organismsDiffer>
    <experiments>3</experiments>
</comment>
<comment type="interaction">
    <interactant intactId="EBI-713635">
        <id>O43639</id>
    </interactant>
    <interactant intactId="EBI-11035148">
        <id>Q8TF50</id>
        <label>ZNF526</label>
    </interactant>
    <organismsDiffer>false</organismsDiffer>
    <experiments>3</experiments>
</comment>
<comment type="interaction">
    <interactant intactId="EBI-713635">
        <id>O43639</id>
    </interactant>
    <interactant intactId="EBI-4395732">
        <id>P0C7X2</id>
        <label>ZNF688</label>
    </interactant>
    <organismsDiffer>false</organismsDiffer>
    <experiments>3</experiments>
</comment>
<comment type="interaction">
    <interactant intactId="EBI-713635">
        <id>O43639</id>
    </interactant>
    <interactant intactId="EBI-26445163">
        <id>Q7VLE8</id>
        <label>lspA1</label>
    </interactant>
    <organismsDiffer>true</organismsDiffer>
    <experiments>2</experiments>
</comment>
<comment type="interaction">
    <interactant intactId="EBI-713635">
        <id>O43639</id>
    </interactant>
    <interactant intactId="EBI-7287667">
        <id>Q63604</id>
        <label>Ntrk2</label>
    </interactant>
    <organismsDiffer>true</organismsDiffer>
    <experiments>2</experiments>
</comment>
<comment type="subcellular location">
    <subcellularLocation>
        <location evidence="12">Cytoplasm</location>
    </subcellularLocation>
    <subcellularLocation>
        <location evidence="12">Endoplasmic reticulum</location>
    </subcellularLocation>
</comment>
<comment type="tissue specificity">
    <text>Ubiquitous.</text>
</comment>
<comment type="PTM">
    <text evidence="6">Phosphorylated.</text>
</comment>
<feature type="initiator methionine" description="Removed" evidence="18">
    <location>
        <position position="1"/>
    </location>
</feature>
<feature type="chain" id="PRO_0000096767" description="Cytoplasmic protein NCK2">
    <location>
        <begin position="2"/>
        <end position="380"/>
    </location>
</feature>
<feature type="domain" description="SH3 1" evidence="4">
    <location>
        <begin position="2"/>
        <end position="61"/>
    </location>
</feature>
<feature type="domain" description="SH3 2" evidence="4">
    <location>
        <begin position="111"/>
        <end position="170"/>
    </location>
</feature>
<feature type="domain" description="SH3 3" evidence="4">
    <location>
        <begin position="195"/>
        <end position="257"/>
    </location>
</feature>
<feature type="domain" description="SH2" evidence="3">
    <location>
        <begin position="285"/>
        <end position="380"/>
    </location>
</feature>
<feature type="region of interest" description="Disordered" evidence="5">
    <location>
        <begin position="79"/>
        <end position="102"/>
    </location>
</feature>
<feature type="modified residue" description="N-acetylthreonine" evidence="18">
    <location>
        <position position="2"/>
    </location>
</feature>
<feature type="modified residue" description="Phosphoserine" evidence="17 19">
    <location>
        <position position="90"/>
    </location>
</feature>
<feature type="modified residue" description="Phosphothreonine" evidence="19">
    <location>
        <position position="92"/>
    </location>
</feature>
<feature type="modified residue" description="Phosphoserine" evidence="2">
    <location>
        <position position="94"/>
    </location>
</feature>
<feature type="modified residue" description="Phosphotyrosine" evidence="16">
    <location>
        <position position="110"/>
    </location>
</feature>
<feature type="mutagenesis site" description="Abolishes interaction with DOCK1." evidence="9">
    <original>W</original>
    <variation>K</variation>
    <location>
        <position position="148"/>
    </location>
</feature>
<feature type="mutagenesis site" description="Abolishes interaction with DOCK1 and IRS1." evidence="8 9">
    <original>W</original>
    <variation>K</variation>
    <location>
        <position position="234"/>
    </location>
</feature>
<feature type="sequence conflict" description="In Ref. 1; AAC04831." evidence="15" ref="1">
    <original>K</original>
    <variation>KV</variation>
    <location>
        <position position="25"/>
    </location>
</feature>
<feature type="sequence conflict" description="In Ref. 2; AAC80284." evidence="15" ref="2">
    <original>P</original>
    <variation>A</variation>
    <location>
        <position position="100"/>
    </location>
</feature>
<feature type="sequence conflict" description="In Ref. 1; AAC04831." evidence="15" ref="1">
    <original>E</original>
    <variation>Q</variation>
    <location>
        <position position="296"/>
    </location>
</feature>
<feature type="strand" evidence="22">
    <location>
        <begin position="5"/>
        <end position="11"/>
    </location>
</feature>
<feature type="strand" evidence="24">
    <location>
        <begin position="17"/>
        <end position="20"/>
    </location>
</feature>
<feature type="strand" evidence="22">
    <location>
        <begin position="28"/>
        <end position="33"/>
    </location>
</feature>
<feature type="strand" evidence="22">
    <location>
        <begin position="35"/>
        <end position="38"/>
    </location>
</feature>
<feature type="strand" evidence="22">
    <location>
        <begin position="40"/>
        <end position="42"/>
    </location>
</feature>
<feature type="strand" evidence="22">
    <location>
        <begin position="48"/>
        <end position="50"/>
    </location>
</feature>
<feature type="strand" evidence="22">
    <location>
        <begin position="55"/>
        <end position="58"/>
    </location>
</feature>
<feature type="strand" evidence="25">
    <location>
        <begin position="115"/>
        <end position="118"/>
    </location>
</feature>
<feature type="strand" evidence="25">
    <location>
        <begin position="137"/>
        <end position="142"/>
    </location>
</feature>
<feature type="strand" evidence="25">
    <location>
        <begin position="147"/>
        <end position="153"/>
    </location>
</feature>
<feature type="strand" evidence="25">
    <location>
        <begin position="156"/>
        <end position="161"/>
    </location>
</feature>
<feature type="helix" evidence="25">
    <location>
        <begin position="162"/>
        <end position="164"/>
    </location>
</feature>
<feature type="strand" evidence="25">
    <location>
        <begin position="165"/>
        <end position="167"/>
    </location>
</feature>
<feature type="strand" evidence="20">
    <location>
        <begin position="196"/>
        <end position="204"/>
    </location>
</feature>
<feature type="strand" evidence="20">
    <location>
        <begin position="210"/>
        <end position="213"/>
    </location>
</feature>
<feature type="strand" evidence="20">
    <location>
        <begin position="222"/>
        <end position="226"/>
    </location>
</feature>
<feature type="turn" evidence="20">
    <location>
        <begin position="230"/>
        <end position="232"/>
    </location>
</feature>
<feature type="strand" evidence="20">
    <location>
        <begin position="234"/>
        <end position="239"/>
    </location>
</feature>
<feature type="turn" evidence="20">
    <location>
        <begin position="240"/>
        <end position="242"/>
    </location>
</feature>
<feature type="strand" evidence="20">
    <location>
        <begin position="243"/>
        <end position="248"/>
    </location>
</feature>
<feature type="strand" evidence="20">
    <location>
        <begin position="251"/>
        <end position="254"/>
    </location>
</feature>
<feature type="helix" evidence="23">
    <location>
        <begin position="292"/>
        <end position="302"/>
    </location>
</feature>
<feature type="strand" evidence="23">
    <location>
        <begin position="307"/>
        <end position="312"/>
    </location>
</feature>
<feature type="strand" evidence="23">
    <location>
        <begin position="314"/>
        <end position="316"/>
    </location>
</feature>
<feature type="strand" evidence="23">
    <location>
        <begin position="320"/>
        <end position="324"/>
    </location>
</feature>
<feature type="strand" evidence="23">
    <location>
        <begin position="327"/>
        <end position="329"/>
    </location>
</feature>
<feature type="strand" evidence="23">
    <location>
        <begin position="331"/>
        <end position="338"/>
    </location>
</feature>
<feature type="strand" evidence="23">
    <location>
        <begin position="341"/>
        <end position="344"/>
    </location>
</feature>
<feature type="strand" evidence="23">
    <location>
        <begin position="347"/>
        <end position="351"/>
    </location>
</feature>
<feature type="helix" evidence="23">
    <location>
        <begin position="352"/>
        <end position="361"/>
    </location>
</feature>
<feature type="strand" evidence="23">
    <location>
        <begin position="364"/>
        <end position="366"/>
    </location>
</feature>
<feature type="turn" evidence="21">
    <location>
        <begin position="368"/>
        <end position="370"/>
    </location>
</feature>
<keyword id="KW-0002">3D-structure</keyword>
<keyword id="KW-0007">Acetylation</keyword>
<keyword id="KW-0963">Cytoplasm</keyword>
<keyword id="KW-0256">Endoplasmic reticulum</keyword>
<keyword id="KW-0597">Phosphoprotein</keyword>
<keyword id="KW-1267">Proteomics identification</keyword>
<keyword id="KW-1185">Reference proteome</keyword>
<keyword id="KW-0677">Repeat</keyword>
<keyword id="KW-0727">SH2 domain</keyword>
<keyword id="KW-0728">SH3 domain</keyword>
<keyword id="KW-0810">Translation regulation</keyword>
<protein>
    <recommendedName>
        <fullName>Cytoplasmic protein NCK2</fullName>
    </recommendedName>
    <alternativeName>
        <fullName>Growth factor receptor-bound protein 4</fullName>
    </alternativeName>
    <alternativeName>
        <fullName>NCK adaptor protein 2</fullName>
        <shortName>Nck-2</shortName>
    </alternativeName>
    <alternativeName>
        <fullName>SH2/SH3 adaptor protein NCK-beta</fullName>
    </alternativeName>
</protein>
<evidence type="ECO:0000250" key="1"/>
<evidence type="ECO:0000250" key="2">
    <source>
        <dbReference type="UniProtKB" id="O55033"/>
    </source>
</evidence>
<evidence type="ECO:0000255" key="3">
    <source>
        <dbReference type="PROSITE-ProRule" id="PRU00191"/>
    </source>
</evidence>
<evidence type="ECO:0000255" key="4">
    <source>
        <dbReference type="PROSITE-ProRule" id="PRU00192"/>
    </source>
</evidence>
<evidence type="ECO:0000256" key="5">
    <source>
        <dbReference type="SAM" id="MobiDB-lite"/>
    </source>
</evidence>
<evidence type="ECO:0000269" key="6">
    <source>
    </source>
</evidence>
<evidence type="ECO:0000269" key="7">
    <source>
    </source>
</evidence>
<evidence type="ECO:0000269" key="8">
    <source>
    </source>
</evidence>
<evidence type="ECO:0000269" key="9">
    <source>
    </source>
</evidence>
<evidence type="ECO:0000269" key="10">
    <source>
    </source>
</evidence>
<evidence type="ECO:0000269" key="11">
    <source>
    </source>
</evidence>
<evidence type="ECO:0000269" key="12">
    <source>
    </source>
</evidence>
<evidence type="ECO:0000269" key="13">
    <source>
    </source>
</evidence>
<evidence type="ECO:0000269" key="14">
    <source>
    </source>
</evidence>
<evidence type="ECO:0000305" key="15"/>
<evidence type="ECO:0007744" key="16">
    <source>
    </source>
</evidence>
<evidence type="ECO:0007744" key="17">
    <source>
    </source>
</evidence>
<evidence type="ECO:0007744" key="18">
    <source>
    </source>
</evidence>
<evidence type="ECO:0007744" key="19">
    <source>
    </source>
</evidence>
<evidence type="ECO:0007829" key="20">
    <source>
        <dbReference type="PDB" id="1U5S"/>
    </source>
</evidence>
<evidence type="ECO:0007829" key="21">
    <source>
        <dbReference type="PDB" id="1Z3K"/>
    </source>
</evidence>
<evidence type="ECO:0007829" key="22">
    <source>
        <dbReference type="PDB" id="2B86"/>
    </source>
</evidence>
<evidence type="ECO:0007829" key="23">
    <source>
        <dbReference type="PDB" id="2CIA"/>
    </source>
</evidence>
<evidence type="ECO:0007829" key="24">
    <source>
        <dbReference type="PDB" id="2JXB"/>
    </source>
</evidence>
<evidence type="ECO:0007829" key="25">
    <source>
        <dbReference type="PDB" id="4E6R"/>
    </source>
</evidence>
<dbReference type="EMBL" id="AF043119">
    <property type="protein sequence ID" value="AAC04831.1"/>
    <property type="molecule type" value="mRNA"/>
</dbReference>
<dbReference type="EMBL" id="AF047487">
    <property type="protein sequence ID" value="AAC80284.1"/>
    <property type="molecule type" value="mRNA"/>
</dbReference>
<dbReference type="EMBL" id="CH471127">
    <property type="protein sequence ID" value="EAX01753.1"/>
    <property type="molecule type" value="Genomic_DNA"/>
</dbReference>
<dbReference type="EMBL" id="CH471127">
    <property type="protein sequence ID" value="EAX01754.1"/>
    <property type="molecule type" value="Genomic_DNA"/>
</dbReference>
<dbReference type="EMBL" id="BC000103">
    <property type="protein sequence ID" value="AAH00103.1"/>
    <property type="molecule type" value="mRNA"/>
</dbReference>
<dbReference type="EMBL" id="BC007195">
    <property type="protein sequence ID" value="AAH07195.1"/>
    <property type="molecule type" value="mRNA"/>
</dbReference>
<dbReference type="CCDS" id="CCDS33266.1"/>
<dbReference type="RefSeq" id="NP_001004720.1">
    <property type="nucleotide sequence ID" value="NM_001004720.3"/>
</dbReference>
<dbReference type="RefSeq" id="NP_003572.2">
    <property type="nucleotide sequence ID" value="NM_003581.4"/>
</dbReference>
<dbReference type="RefSeq" id="XP_006712860.1">
    <property type="nucleotide sequence ID" value="XM_006712797.4"/>
</dbReference>
<dbReference type="RefSeq" id="XP_011510293.1">
    <property type="nucleotide sequence ID" value="XM_011511991.4"/>
</dbReference>
<dbReference type="RefSeq" id="XP_016860592.1">
    <property type="nucleotide sequence ID" value="XM_017005103.2"/>
</dbReference>
<dbReference type="RefSeq" id="XP_016860593.1">
    <property type="nucleotide sequence ID" value="XM_017005104.2"/>
</dbReference>
<dbReference type="RefSeq" id="XP_016860594.1">
    <property type="nucleotide sequence ID" value="XM_017005105.2"/>
</dbReference>
<dbReference type="RefSeq" id="XP_047301973.1">
    <property type="nucleotide sequence ID" value="XM_047446017.1"/>
</dbReference>
<dbReference type="RefSeq" id="XP_047301974.1">
    <property type="nucleotide sequence ID" value="XM_047446018.1"/>
</dbReference>
<dbReference type="RefSeq" id="XP_047301975.1">
    <property type="nucleotide sequence ID" value="XM_047446019.1"/>
</dbReference>
<dbReference type="RefSeq" id="XP_047301976.1">
    <property type="nucleotide sequence ID" value="XM_047446020.1"/>
</dbReference>
<dbReference type="PDB" id="1U5S">
    <property type="method" value="NMR"/>
    <property type="chains" value="A=192-262"/>
</dbReference>
<dbReference type="PDB" id="1WX6">
    <property type="method" value="NMR"/>
    <property type="chains" value="A=188-265"/>
</dbReference>
<dbReference type="PDB" id="1Z3K">
    <property type="method" value="NMR"/>
    <property type="chains" value="A=283-380"/>
</dbReference>
<dbReference type="PDB" id="2B86">
    <property type="method" value="NMR"/>
    <property type="chains" value="A=1-59"/>
</dbReference>
<dbReference type="PDB" id="2CIA">
    <property type="method" value="X-ray"/>
    <property type="resolution" value="1.45 A"/>
    <property type="chains" value="A=284-380"/>
</dbReference>
<dbReference type="PDB" id="2FRW">
    <property type="method" value="NMR"/>
    <property type="chains" value="A=114-170"/>
</dbReference>
<dbReference type="PDB" id="2FRY">
    <property type="method" value="NMR"/>
    <property type="chains" value="A=198-256"/>
</dbReference>
<dbReference type="PDB" id="2JXB">
    <property type="method" value="NMR"/>
    <property type="chains" value="A=1-59"/>
</dbReference>
<dbReference type="PDB" id="4E6R">
    <property type="method" value="X-ray"/>
    <property type="resolution" value="2.20 A"/>
    <property type="chains" value="A/B=114-170"/>
</dbReference>
<dbReference type="PDBsum" id="1U5S"/>
<dbReference type="PDBsum" id="1WX6"/>
<dbReference type="PDBsum" id="1Z3K"/>
<dbReference type="PDBsum" id="2B86"/>
<dbReference type="PDBsum" id="2CIA"/>
<dbReference type="PDBsum" id="2FRW"/>
<dbReference type="PDBsum" id="2FRY"/>
<dbReference type="PDBsum" id="2JXB"/>
<dbReference type="PDBsum" id="4E6R"/>
<dbReference type="BMRB" id="O43639"/>
<dbReference type="SMR" id="O43639"/>
<dbReference type="BioGRID" id="114020">
    <property type="interactions" value="256"/>
</dbReference>
<dbReference type="FunCoup" id="O43639">
    <property type="interactions" value="2756"/>
</dbReference>
<dbReference type="IntAct" id="O43639">
    <property type="interactions" value="217"/>
</dbReference>
<dbReference type="MINT" id="O43639"/>
<dbReference type="STRING" id="9606.ENSP00000233154"/>
<dbReference type="MoonDB" id="O43639">
    <property type="type" value="Predicted"/>
</dbReference>
<dbReference type="GlyGen" id="O43639">
    <property type="glycosylation" value="1 site"/>
</dbReference>
<dbReference type="iPTMnet" id="O43639"/>
<dbReference type="PhosphoSitePlus" id="O43639"/>
<dbReference type="BioMuta" id="NCK2"/>
<dbReference type="jPOST" id="O43639"/>
<dbReference type="MassIVE" id="O43639"/>
<dbReference type="PaxDb" id="9606-ENSP00000233154"/>
<dbReference type="PeptideAtlas" id="O43639"/>
<dbReference type="ProteomicsDB" id="49088"/>
<dbReference type="Pumba" id="O43639"/>
<dbReference type="ABCD" id="O43639">
    <property type="antibodies" value="1 sequenced antibody"/>
</dbReference>
<dbReference type="Antibodypedia" id="4240">
    <property type="antibodies" value="343 antibodies from 38 providers"/>
</dbReference>
<dbReference type="DNASU" id="8440"/>
<dbReference type="Ensembl" id="ENST00000233154.9">
    <property type="protein sequence ID" value="ENSP00000233154.4"/>
    <property type="gene ID" value="ENSG00000071051.14"/>
</dbReference>
<dbReference type="Ensembl" id="ENST00000393349.2">
    <property type="protein sequence ID" value="ENSP00000377018.2"/>
    <property type="gene ID" value="ENSG00000071051.14"/>
</dbReference>
<dbReference type="GeneID" id="8440"/>
<dbReference type="KEGG" id="hsa:8440"/>
<dbReference type="MANE-Select" id="ENST00000233154.9">
    <property type="protein sequence ID" value="ENSP00000233154.4"/>
    <property type="RefSeq nucleotide sequence ID" value="NM_003581.5"/>
    <property type="RefSeq protein sequence ID" value="NP_003572.2"/>
</dbReference>
<dbReference type="UCSC" id="uc002tdg.4">
    <property type="organism name" value="human"/>
</dbReference>
<dbReference type="AGR" id="HGNC:7665"/>
<dbReference type="CTD" id="8440"/>
<dbReference type="DisGeNET" id="8440"/>
<dbReference type="GeneCards" id="NCK2"/>
<dbReference type="HGNC" id="HGNC:7665">
    <property type="gene designation" value="NCK2"/>
</dbReference>
<dbReference type="HPA" id="ENSG00000071051">
    <property type="expression patterns" value="Low tissue specificity"/>
</dbReference>
<dbReference type="MIM" id="604930">
    <property type="type" value="gene"/>
</dbReference>
<dbReference type="neXtProt" id="NX_O43639"/>
<dbReference type="NIAGADS" id="ENSG00000071051"/>
<dbReference type="OpenTargets" id="ENSG00000071051"/>
<dbReference type="PharmGKB" id="PA31467"/>
<dbReference type="VEuPathDB" id="HostDB:ENSG00000071051"/>
<dbReference type="eggNOG" id="KOG4226">
    <property type="taxonomic scope" value="Eukaryota"/>
</dbReference>
<dbReference type="GeneTree" id="ENSGT00940000157728"/>
<dbReference type="HOGENOM" id="CLU_025160_0_1_1"/>
<dbReference type="InParanoid" id="O43639"/>
<dbReference type="OMA" id="RKTCARD"/>
<dbReference type="OrthoDB" id="26539at2759"/>
<dbReference type="PAN-GO" id="O43639">
    <property type="GO annotations" value="8 GO annotations based on evolutionary models"/>
</dbReference>
<dbReference type="PhylomeDB" id="O43639"/>
<dbReference type="TreeFam" id="TF351631"/>
<dbReference type="PathwayCommons" id="O43639"/>
<dbReference type="Reactome" id="R-HSA-186763">
    <property type="pathway name" value="Downstream signal transduction"/>
</dbReference>
<dbReference type="Reactome" id="R-HSA-373753">
    <property type="pathway name" value="Nephrin family interactions"/>
</dbReference>
<dbReference type="Reactome" id="R-HSA-3928664">
    <property type="pathway name" value="Ephrin signaling"/>
</dbReference>
<dbReference type="Reactome" id="R-HSA-428540">
    <property type="pathway name" value="Activation of RAC1"/>
</dbReference>
<dbReference type="Reactome" id="R-HSA-4420097">
    <property type="pathway name" value="VEGFA-VEGFR2 Pathway"/>
</dbReference>
<dbReference type="Reactome" id="R-HSA-8985801">
    <property type="pathway name" value="Regulation of cortical dendrite branching"/>
</dbReference>
<dbReference type="Reactome" id="R-HSA-9013420">
    <property type="pathway name" value="RHOU GTPase cycle"/>
</dbReference>
<dbReference type="Reactome" id="R-HSA-9013424">
    <property type="pathway name" value="RHOV GTPase cycle"/>
</dbReference>
<dbReference type="SignaLink" id="O43639"/>
<dbReference type="SIGNOR" id="O43639"/>
<dbReference type="BioGRID-ORCS" id="8440">
    <property type="hits" value="10 hits in 1157 CRISPR screens"/>
</dbReference>
<dbReference type="ChiTaRS" id="NCK2">
    <property type="organism name" value="human"/>
</dbReference>
<dbReference type="EvolutionaryTrace" id="O43639"/>
<dbReference type="GeneWiki" id="NCK2"/>
<dbReference type="GenomeRNAi" id="8440"/>
<dbReference type="Pharos" id="O43639">
    <property type="development level" value="Tbio"/>
</dbReference>
<dbReference type="PRO" id="PR:O43639"/>
<dbReference type="Proteomes" id="UP000005640">
    <property type="component" value="Chromosome 2"/>
</dbReference>
<dbReference type="RNAct" id="O43639">
    <property type="molecule type" value="protein"/>
</dbReference>
<dbReference type="Bgee" id="ENSG00000071051">
    <property type="expression patterns" value="Expressed in cortical plate and 196 other cell types or tissues"/>
</dbReference>
<dbReference type="ExpressionAtlas" id="O43639">
    <property type="expression patterns" value="baseline and differential"/>
</dbReference>
<dbReference type="GO" id="GO:0005737">
    <property type="term" value="C:cytoplasm"/>
    <property type="evidence" value="ECO:0000314"/>
    <property type="project" value="BHF-UCL"/>
</dbReference>
<dbReference type="GO" id="GO:0005829">
    <property type="term" value="C:cytosol"/>
    <property type="evidence" value="ECO:0000304"/>
    <property type="project" value="Reactome"/>
</dbReference>
<dbReference type="GO" id="GO:0005783">
    <property type="term" value="C:endoplasmic reticulum"/>
    <property type="evidence" value="ECO:0000314"/>
    <property type="project" value="ParkinsonsUK-UCL"/>
</dbReference>
<dbReference type="GO" id="GO:0014069">
    <property type="term" value="C:postsynaptic density"/>
    <property type="evidence" value="ECO:0007669"/>
    <property type="project" value="Ensembl"/>
</dbReference>
<dbReference type="GO" id="GO:0012506">
    <property type="term" value="C:vesicle membrane"/>
    <property type="evidence" value="ECO:0007669"/>
    <property type="project" value="Ensembl"/>
</dbReference>
<dbReference type="GO" id="GO:0008093">
    <property type="term" value="F:cytoskeletal anchor activity"/>
    <property type="evidence" value="ECO:0000303"/>
    <property type="project" value="UniProtKB"/>
</dbReference>
<dbReference type="GO" id="GO:0001784">
    <property type="term" value="F:phosphotyrosine residue binding"/>
    <property type="evidence" value="ECO:0000353"/>
    <property type="project" value="CAFA"/>
</dbReference>
<dbReference type="GO" id="GO:0044877">
    <property type="term" value="F:protein-containing complex binding"/>
    <property type="evidence" value="ECO:0007669"/>
    <property type="project" value="Ensembl"/>
</dbReference>
<dbReference type="GO" id="GO:0030971">
    <property type="term" value="F:receptor tyrosine kinase binding"/>
    <property type="evidence" value="ECO:0000318"/>
    <property type="project" value="GO_Central"/>
</dbReference>
<dbReference type="GO" id="GO:0097110">
    <property type="term" value="F:scaffold protein binding"/>
    <property type="evidence" value="ECO:0007669"/>
    <property type="project" value="Ensembl"/>
</dbReference>
<dbReference type="GO" id="GO:0035591">
    <property type="term" value="F:signaling adaptor activity"/>
    <property type="evidence" value="ECO:0000318"/>
    <property type="project" value="GO_Central"/>
</dbReference>
<dbReference type="GO" id="GO:0030159">
    <property type="term" value="F:signaling receptor complex adaptor activity"/>
    <property type="evidence" value="ECO:0000303"/>
    <property type="project" value="UniProtKB"/>
</dbReference>
<dbReference type="GO" id="GO:0007015">
    <property type="term" value="P:actin filament organization"/>
    <property type="evidence" value="ECO:0007669"/>
    <property type="project" value="Ensembl"/>
</dbReference>
<dbReference type="GO" id="GO:0016477">
    <property type="term" value="P:cell migration"/>
    <property type="evidence" value="ECO:0000318"/>
    <property type="project" value="GO_Central"/>
</dbReference>
<dbReference type="GO" id="GO:0060996">
    <property type="term" value="P:dendritic spine development"/>
    <property type="evidence" value="ECO:0007669"/>
    <property type="project" value="Ensembl"/>
</dbReference>
<dbReference type="GO" id="GO:0048013">
    <property type="term" value="P:ephrin receptor signaling pathway"/>
    <property type="evidence" value="ECO:0000318"/>
    <property type="project" value="GO_Central"/>
</dbReference>
<dbReference type="GO" id="GO:0007173">
    <property type="term" value="P:epidermal growth factor receptor signaling pathway"/>
    <property type="evidence" value="ECO:0000304"/>
    <property type="project" value="ProtInc"/>
</dbReference>
<dbReference type="GO" id="GO:0001771">
    <property type="term" value="P:immunological synapse formation"/>
    <property type="evidence" value="ECO:0007669"/>
    <property type="project" value="Ensembl"/>
</dbReference>
<dbReference type="GO" id="GO:0030032">
    <property type="term" value="P:lamellipodium assembly"/>
    <property type="evidence" value="ECO:0007669"/>
    <property type="project" value="Ensembl"/>
</dbReference>
<dbReference type="GO" id="GO:0008285">
    <property type="term" value="P:negative regulation of cell population proliferation"/>
    <property type="evidence" value="ECO:0000304"/>
    <property type="project" value="ProtInc"/>
</dbReference>
<dbReference type="GO" id="GO:1903898">
    <property type="term" value="P:negative regulation of PERK-mediated unfolded protein response"/>
    <property type="evidence" value="ECO:0000318"/>
    <property type="project" value="GO_Central"/>
</dbReference>
<dbReference type="GO" id="GO:0000122">
    <property type="term" value="P:negative regulation of transcription by RNA polymerase II"/>
    <property type="evidence" value="ECO:0007669"/>
    <property type="project" value="Ensembl"/>
</dbReference>
<dbReference type="GO" id="GO:0030838">
    <property type="term" value="P:positive regulation of actin filament polymerization"/>
    <property type="evidence" value="ECO:0000315"/>
    <property type="project" value="UniProtKB"/>
</dbReference>
<dbReference type="GO" id="GO:1902237">
    <property type="term" value="P:positive regulation of endoplasmic reticulum stress-induced intrinsic apoptotic signaling pathway"/>
    <property type="evidence" value="ECO:0000318"/>
    <property type="project" value="GO_Central"/>
</dbReference>
<dbReference type="GO" id="GO:0042102">
    <property type="term" value="P:positive regulation of T cell proliferation"/>
    <property type="evidence" value="ECO:0000315"/>
    <property type="project" value="UniProtKB"/>
</dbReference>
<dbReference type="GO" id="GO:0045944">
    <property type="term" value="P:positive regulation of transcription by RNA polymerase II"/>
    <property type="evidence" value="ECO:0000314"/>
    <property type="project" value="UniProtKB"/>
</dbReference>
<dbReference type="GO" id="GO:0036493">
    <property type="term" value="P:positive regulation of translation in response to endoplasmic reticulum stress"/>
    <property type="evidence" value="ECO:0000318"/>
    <property type="project" value="GO_Central"/>
</dbReference>
<dbReference type="GO" id="GO:0036491">
    <property type="term" value="P:regulation of translation initiation in response to endoplasmic reticulum stress"/>
    <property type="evidence" value="ECO:0007669"/>
    <property type="project" value="Ensembl"/>
</dbReference>
<dbReference type="GO" id="GO:0007172">
    <property type="term" value="P:signal complex assembly"/>
    <property type="evidence" value="ECO:0000303"/>
    <property type="project" value="UniProtKB"/>
</dbReference>
<dbReference type="GO" id="GO:0007165">
    <property type="term" value="P:signal transduction"/>
    <property type="evidence" value="ECO:0000304"/>
    <property type="project" value="ProtInc"/>
</dbReference>
<dbReference type="GO" id="GO:0042110">
    <property type="term" value="P:T cell activation"/>
    <property type="evidence" value="ECO:0000303"/>
    <property type="project" value="UniProtKB"/>
</dbReference>
<dbReference type="CDD" id="cd10409">
    <property type="entry name" value="SH2_Nck2"/>
    <property type="match status" value="1"/>
</dbReference>
<dbReference type="CDD" id="cd11899">
    <property type="entry name" value="SH3_Nck2_1"/>
    <property type="match status" value="1"/>
</dbReference>
<dbReference type="CDD" id="cd11902">
    <property type="entry name" value="SH3_Nck2_2"/>
    <property type="match status" value="1"/>
</dbReference>
<dbReference type="CDD" id="cd11903">
    <property type="entry name" value="SH3_Nck2_3"/>
    <property type="match status" value="1"/>
</dbReference>
<dbReference type="FunFam" id="2.30.30.40:FF:000061">
    <property type="entry name" value="Cytoplasmic protein"/>
    <property type="match status" value="1"/>
</dbReference>
<dbReference type="FunFam" id="2.30.30.40:FF:000110">
    <property type="entry name" value="Cytoplasmic protein"/>
    <property type="match status" value="1"/>
</dbReference>
<dbReference type="FunFam" id="2.30.30.40:FF:000126">
    <property type="entry name" value="Cytoplasmic protein"/>
    <property type="match status" value="1"/>
</dbReference>
<dbReference type="FunFam" id="3.30.505.10:FF:000027">
    <property type="entry name" value="Cytoplasmic protein nck1"/>
    <property type="match status" value="1"/>
</dbReference>
<dbReference type="Gene3D" id="3.30.505.10">
    <property type="entry name" value="SH2 domain"/>
    <property type="match status" value="1"/>
</dbReference>
<dbReference type="Gene3D" id="2.30.30.40">
    <property type="entry name" value="SH3 Domains"/>
    <property type="match status" value="3"/>
</dbReference>
<dbReference type="InterPro" id="IPR017304">
    <property type="entry name" value="NCK"/>
</dbReference>
<dbReference type="InterPro" id="IPR035883">
    <property type="entry name" value="Nck2_SH2"/>
</dbReference>
<dbReference type="InterPro" id="IPR035559">
    <property type="entry name" value="Nck2_SH3_1"/>
</dbReference>
<dbReference type="InterPro" id="IPR035560">
    <property type="entry name" value="Nck2_SH3_2"/>
</dbReference>
<dbReference type="InterPro" id="IPR035561">
    <property type="entry name" value="Nck2_SH3_3"/>
</dbReference>
<dbReference type="InterPro" id="IPR000980">
    <property type="entry name" value="SH2"/>
</dbReference>
<dbReference type="InterPro" id="IPR036860">
    <property type="entry name" value="SH2_dom_sf"/>
</dbReference>
<dbReference type="InterPro" id="IPR036028">
    <property type="entry name" value="SH3-like_dom_sf"/>
</dbReference>
<dbReference type="InterPro" id="IPR001452">
    <property type="entry name" value="SH3_domain"/>
</dbReference>
<dbReference type="InterPro" id="IPR051184">
    <property type="entry name" value="Tyrosine-phos_adapter"/>
</dbReference>
<dbReference type="PANTHER" id="PTHR19969:SF12">
    <property type="entry name" value="CYTOPLASMIC PROTEIN NCK2"/>
    <property type="match status" value="1"/>
</dbReference>
<dbReference type="PANTHER" id="PTHR19969">
    <property type="entry name" value="SH2-SH3 ADAPTOR PROTEIN-RELATED"/>
    <property type="match status" value="1"/>
</dbReference>
<dbReference type="Pfam" id="PF00017">
    <property type="entry name" value="SH2"/>
    <property type="match status" value="1"/>
</dbReference>
<dbReference type="Pfam" id="PF00018">
    <property type="entry name" value="SH3_1"/>
    <property type="match status" value="2"/>
</dbReference>
<dbReference type="Pfam" id="PF14604">
    <property type="entry name" value="SH3_9"/>
    <property type="match status" value="1"/>
</dbReference>
<dbReference type="PIRSF" id="PIRSF037874">
    <property type="entry name" value="Cytoplasmic_NCK"/>
    <property type="match status" value="1"/>
</dbReference>
<dbReference type="PRINTS" id="PR00401">
    <property type="entry name" value="SH2DOMAIN"/>
</dbReference>
<dbReference type="PRINTS" id="PR00452">
    <property type="entry name" value="SH3DOMAIN"/>
</dbReference>
<dbReference type="SMART" id="SM00252">
    <property type="entry name" value="SH2"/>
    <property type="match status" value="1"/>
</dbReference>
<dbReference type="SMART" id="SM00326">
    <property type="entry name" value="SH3"/>
    <property type="match status" value="3"/>
</dbReference>
<dbReference type="SUPFAM" id="SSF55550">
    <property type="entry name" value="SH2 domain"/>
    <property type="match status" value="1"/>
</dbReference>
<dbReference type="SUPFAM" id="SSF50044">
    <property type="entry name" value="SH3-domain"/>
    <property type="match status" value="3"/>
</dbReference>
<dbReference type="PROSITE" id="PS50001">
    <property type="entry name" value="SH2"/>
    <property type="match status" value="1"/>
</dbReference>
<dbReference type="PROSITE" id="PS50002">
    <property type="entry name" value="SH3"/>
    <property type="match status" value="3"/>
</dbReference>
<reference key="1">
    <citation type="journal article" date="1998" name="J. Biol. Chem.">
        <title>Identification of Nck family genes, chromosomal localization, expression, and signaling specificity.</title>
        <authorList>
            <person name="Chen M."/>
            <person name="She H."/>
            <person name="Davis E.M."/>
            <person name="Spicer C.M."/>
            <person name="Kim L."/>
            <person name="Ren R."/>
            <person name="LeBeau M.M."/>
            <person name="Li W."/>
        </authorList>
    </citation>
    <scope>NUCLEOTIDE SEQUENCE [MRNA]</scope>
</reference>
<reference key="2">
    <citation type="journal article" date="1998" name="Mol. Biol. Cell">
        <title>Nck-2, a novel Src homology2/3-containing adaptor protein that interacts with the LIM-only protein PINCH and components of growth factor receptor kinase-signaling pathways.</title>
        <authorList>
            <person name="Tu Y."/>
            <person name="Li F."/>
            <person name="Wu C."/>
        </authorList>
    </citation>
    <scope>NUCLEOTIDE SEQUENCE [MRNA]</scope>
    <scope>INTERACTION WITH LIMS1</scope>
    <source>
        <tissue>Lung</tissue>
    </source>
</reference>
<reference key="3">
    <citation type="submission" date="2005-09" db="EMBL/GenBank/DDBJ databases">
        <authorList>
            <person name="Mural R.J."/>
            <person name="Istrail S."/>
            <person name="Sutton G.G."/>
            <person name="Florea L."/>
            <person name="Halpern A.L."/>
            <person name="Mobarry C.M."/>
            <person name="Lippert R."/>
            <person name="Walenz B."/>
            <person name="Shatkay H."/>
            <person name="Dew I."/>
            <person name="Miller J.R."/>
            <person name="Flanigan M.J."/>
            <person name="Edwards N.J."/>
            <person name="Bolanos R."/>
            <person name="Fasulo D."/>
            <person name="Halldorsson B.V."/>
            <person name="Hannenhalli S."/>
            <person name="Turner R."/>
            <person name="Yooseph S."/>
            <person name="Lu F."/>
            <person name="Nusskern D.R."/>
            <person name="Shue B.C."/>
            <person name="Zheng X.H."/>
            <person name="Zhong F."/>
            <person name="Delcher A.L."/>
            <person name="Huson D.H."/>
            <person name="Kravitz S.A."/>
            <person name="Mouchard L."/>
            <person name="Reinert K."/>
            <person name="Remington K.A."/>
            <person name="Clark A.G."/>
            <person name="Waterman M.S."/>
            <person name="Eichler E.E."/>
            <person name="Adams M.D."/>
            <person name="Hunkapiller M.W."/>
            <person name="Myers E.W."/>
            <person name="Venter J.C."/>
        </authorList>
    </citation>
    <scope>NUCLEOTIDE SEQUENCE [LARGE SCALE GENOMIC DNA]</scope>
</reference>
<reference key="4">
    <citation type="journal article" date="2004" name="Genome Res.">
        <title>The status, quality, and expansion of the NIH full-length cDNA project: the Mammalian Gene Collection (MGC).</title>
        <authorList>
            <consortium name="The MGC Project Team"/>
        </authorList>
    </citation>
    <scope>NUCLEOTIDE SEQUENCE [LARGE SCALE MRNA]</scope>
    <source>
        <tissue>Placenta</tissue>
        <tissue>Uterus</tissue>
    </source>
</reference>
<reference key="5">
    <citation type="journal article" date="1999" name="J. Biol. Chem.">
        <title>Identification of Grb4/Nckbeta, a src homology 2 and 3 domain-containing adapter protein having similar binding and biological properties to Nck.</title>
        <authorList>
            <person name="Braverman L.E."/>
            <person name="Quilliam L.A."/>
        </authorList>
    </citation>
    <scope>FUNCTION</scope>
    <scope>INTERACTION WITH EGFR; PAK1; PKN2 AND SOS1</scope>
    <scope>PHOSPHORYLATION</scope>
</reference>
<reference key="6">
    <citation type="journal article" date="1999" name="J. Cell Biol.">
        <title>Paxillin LD4 motif binds PAK and PIX through a novel 95-kD ankyrin repeat, ARF-GAP protein: a role in cytoskeletal remodeling.</title>
        <authorList>
            <person name="Turner C.E."/>
            <person name="Brown M.C."/>
            <person name="Perrotta J.A."/>
            <person name="Riedy M.C."/>
            <person name="Nikolopoulos S.N."/>
            <person name="McDonald A.R."/>
            <person name="Bagrodia S."/>
            <person name="Thomas S.M."/>
            <person name="Leventhal P.S."/>
        </authorList>
    </citation>
    <scope>INTERACTION WITH TGFB1I1</scope>
</reference>
<reference key="7">
    <citation type="journal article" date="2001" name="Biochem. J.">
        <title>Src homology 3 domain-dependent interaction of Nck-2 with insulin receptor substrate-1.</title>
        <authorList>
            <person name="Tu Y."/>
            <person name="Liang L."/>
            <person name="Frank S.J."/>
            <person name="Wu C."/>
        </authorList>
    </citation>
    <scope>FUNCTION</scope>
    <scope>INTERACTION WITH IRS1</scope>
    <scope>MUTAGENESIS OF TRP-234</scope>
</reference>
<reference key="8">
    <citation type="journal article" date="2001" name="FEBS Lett.">
        <title>Identification and kinetic analysis of the interaction between Nck-2 and DOCK180.</title>
        <authorList>
            <person name="Tu Y."/>
            <person name="Kucik D.F."/>
            <person name="Wu C."/>
        </authorList>
    </citation>
    <scope>INTERACTION WITH DOCK1</scope>
    <scope>MUTAGENESIS OF TRP-148 AND TRP-234</scope>
</reference>
<reference key="9">
    <citation type="journal article" date="2002" name="Biochem. Biophys. Res. Commun.">
        <title>Interaction of Axl receptor tyrosine kinase with C1-TEN, a novel C1 domain-containing protein with homology to tensin.</title>
        <authorList>
            <person name="Hafizi S."/>
            <person name="Alindri F."/>
            <person name="Karlsson R."/>
            <person name="Dahlbaeck B."/>
        </authorList>
    </citation>
    <scope>INTERACTION WITH AXL</scope>
</reference>
<reference key="10">
    <citation type="journal article" date="2006" name="FEBS Lett.">
        <title>Pinpointing phosphotyrosine-dependent interactions downstream of the collagen receptor DDR1.</title>
        <authorList>
            <person name="Koo D.H."/>
            <person name="McFadden C."/>
            <person name="Huang Y."/>
            <person name="Abdulhussein R."/>
            <person name="Friese-Hamim M."/>
            <person name="Vogel W.F."/>
        </authorList>
    </citation>
    <scope>INTERACTION WITH DDR1</scope>
</reference>
<reference key="11">
    <citation type="journal article" date="2006" name="J. Biol. Chem.">
        <title>Nck in a complex containing the catalytic subunit of protein phosphatase 1 regulates eukaryotic initiation factor 2alpha signaling and cell survival to endoplasmic reticulum stress.</title>
        <authorList>
            <person name="Latreille M."/>
            <person name="Larose L."/>
        </authorList>
    </citation>
    <scope>IDENTIFICATION IN COMPLEX WITH PP1 AND PPP1R15B</scope>
    <scope>FUNCTION</scope>
    <scope>SUBCELLULAR LOCATION</scope>
</reference>
<reference key="12">
    <citation type="journal article" date="2008" name="J. Proteome Res.">
        <title>Phosphoproteome of resting human platelets.</title>
        <authorList>
            <person name="Zahedi R.P."/>
            <person name="Lewandrowski U."/>
            <person name="Wiesner J."/>
            <person name="Wortelkamp S."/>
            <person name="Moebius J."/>
            <person name="Schuetz C."/>
            <person name="Walter U."/>
            <person name="Gambaryan S."/>
            <person name="Sickmann A."/>
        </authorList>
    </citation>
    <scope>PHOSPHORYLATION [LARGE SCALE ANALYSIS] AT TYR-110</scope>
    <scope>IDENTIFICATION BY MASS SPECTROMETRY [LARGE SCALE ANALYSIS]</scope>
    <source>
        <tissue>Platelet</tissue>
    </source>
</reference>
<reference key="13">
    <citation type="journal article" date="2009" name="BMC Immunol.">
        <title>Identification of SH3 domain interaction partners of human FasL (CD178) by phage display screening.</title>
        <authorList>
            <person name="Voss M."/>
            <person name="Lettau M."/>
            <person name="Janssen O."/>
        </authorList>
    </citation>
    <scope>INTERACTION WITH FASLG</scope>
</reference>
<reference key="14">
    <citation type="journal article" date="2009" name="Sci. Signal.">
        <title>Quantitative phosphoproteomic analysis of T cell receptor signaling reveals system-wide modulation of protein-protein interactions.</title>
        <authorList>
            <person name="Mayya V."/>
            <person name="Lundgren D.H."/>
            <person name="Hwang S.-I."/>
            <person name="Rezaul K."/>
            <person name="Wu L."/>
            <person name="Eng J.K."/>
            <person name="Rodionov V."/>
            <person name="Han D.K."/>
        </authorList>
    </citation>
    <scope>PHOSPHORYLATION [LARGE SCALE ANALYSIS] AT SER-90</scope>
    <scope>IDENTIFICATION BY MASS SPECTROMETRY [LARGE SCALE ANALYSIS]</scope>
    <source>
        <tissue>Leukemic T-cell</tissue>
    </source>
</reference>
<reference key="15">
    <citation type="journal article" date="2011" name="Sci. Signal.">
        <title>System-wide temporal characterization of the proteome and phosphoproteome of human embryonic stem cell differentiation.</title>
        <authorList>
            <person name="Rigbolt K.T."/>
            <person name="Prokhorova T.A."/>
            <person name="Akimov V."/>
            <person name="Henningsen J."/>
            <person name="Johansen P.T."/>
            <person name="Kratchmarova I."/>
            <person name="Kassem M."/>
            <person name="Mann M."/>
            <person name="Olsen J.V."/>
            <person name="Blagoev B."/>
        </authorList>
    </citation>
    <scope>IDENTIFICATION BY MASS SPECTROMETRY [LARGE SCALE ANALYSIS]</scope>
</reference>
<reference key="16">
    <citation type="journal article" date="2012" name="Mol. Cell. Proteomics">
        <title>Comparative large-scale characterisation of plant vs. mammal proteins reveals similar and idiosyncratic N-alpha acetylation features.</title>
        <authorList>
            <person name="Bienvenut W.V."/>
            <person name="Sumpton D."/>
            <person name="Martinez A."/>
            <person name="Lilla S."/>
            <person name="Espagne C."/>
            <person name="Meinnel T."/>
            <person name="Giglione C."/>
        </authorList>
    </citation>
    <scope>ACETYLATION [LARGE SCALE ANALYSIS] AT THR-2</scope>
    <scope>CLEAVAGE OF INITIATOR METHIONINE [LARGE SCALE ANALYSIS]</scope>
    <scope>IDENTIFICATION BY MASS SPECTROMETRY [LARGE SCALE ANALYSIS]</scope>
</reference>
<reference key="17">
    <citation type="journal article" date="2013" name="J. Proteome Res.">
        <title>Toward a comprehensive characterization of a human cancer cell phosphoproteome.</title>
        <authorList>
            <person name="Zhou H."/>
            <person name="Di Palma S."/>
            <person name="Preisinger C."/>
            <person name="Peng M."/>
            <person name="Polat A.N."/>
            <person name="Heck A.J."/>
            <person name="Mohammed S."/>
        </authorList>
    </citation>
    <scope>PHOSPHORYLATION [LARGE SCALE ANALYSIS] AT SER-90 AND THR-92</scope>
    <scope>IDENTIFICATION BY MASS SPECTROMETRY [LARGE SCALE ANALYSIS]</scope>
    <source>
        <tissue>Erythroleukemia</tissue>
    </source>
</reference>
<reference key="18">
    <citation type="submission" date="2005-07" db="PDB data bank">
        <title>Solution structure of the SH3 domain of the human cytoplasmic protein NCK2.</title>
        <authorList>
            <consortium name="RIKEN structural genomics initiative (RSGI)"/>
        </authorList>
    </citation>
    <scope>STRUCTURE BY NMR OF 188-265</scope>
</reference>
<sequence length="380" mass="42915">MTEEVIVIAKWDYTAQQDQELDIKKNERLWLLDDSKTWWRVRNAANRTGYVPSNYVERKNSLKKGSLVKNLKDTLGLGKTRRKTSARDASPTPSTDAEYPANGSGADRIYDLNIPAFVKFAYVAEREDELSLVKGSRVTVMEKCSDGWWRGSYNGQIGWFPSNYVLEEVDEAAAESPSFLSLRKGASLSNGQGSRVLHVVQTLYPFSSVTEEELNFEKGETMEVIEKPENDPEWWKCKNARGQVGLVPKNYVVVLSDGPALHPAHAPQISYTGPSSSGRFAGREWYYGNVTRHQAECALNERGVEGDFLIRDSESSPSDFSVSLKASGKNKHFKVQLVDNVYCIGQRRFHTMDELVEHYKKAPIFTSEHGEKLYLVRALQ</sequence>
<accession>O43639</accession>
<accession>D3DVK1</accession>
<accession>Q9BWN9</accession>
<accession>Q9UIC3</accession>
<proteinExistence type="evidence at protein level"/>
<gene>
    <name type="primary">NCK2</name>
    <name type="synonym">GRB4</name>
</gene>
<name>NCK2_HUMAN</name>